<sequence>MSFNLRGAVLANVSGNTQDQLQETIVDAIQSGEEKMLPGLGVLFEVIWKNADENEKHEMLETLEQGLKK</sequence>
<reference key="1">
    <citation type="submission" date="2008-10" db="EMBL/GenBank/DDBJ databases">
        <title>Genome sequence of Bacillus cereus AH820.</title>
        <authorList>
            <person name="Dodson R.J."/>
            <person name="Durkin A.S."/>
            <person name="Rosovitz M.J."/>
            <person name="Rasko D.A."/>
            <person name="Hoffmaster A."/>
            <person name="Ravel J."/>
            <person name="Sutton G."/>
        </authorList>
    </citation>
    <scope>NUCLEOTIDE SEQUENCE [LARGE SCALE GENOMIC DNA]</scope>
    <source>
        <strain>AH820</strain>
    </source>
</reference>
<feature type="chain" id="PRO_1000131502" description="Small, acid-soluble spore protein I">
    <location>
        <begin position="1"/>
        <end position="69"/>
    </location>
</feature>
<organism>
    <name type="scientific">Bacillus cereus (strain AH820)</name>
    <dbReference type="NCBI Taxonomy" id="405535"/>
    <lineage>
        <taxon>Bacteria</taxon>
        <taxon>Bacillati</taxon>
        <taxon>Bacillota</taxon>
        <taxon>Bacilli</taxon>
        <taxon>Bacillales</taxon>
        <taxon>Bacillaceae</taxon>
        <taxon>Bacillus</taxon>
        <taxon>Bacillus cereus group</taxon>
    </lineage>
</organism>
<protein>
    <recommendedName>
        <fullName evidence="1">Small, acid-soluble spore protein I</fullName>
        <shortName evidence="1">SASP I</shortName>
    </recommendedName>
</protein>
<keyword id="KW-0749">Sporulation</keyword>
<proteinExistence type="inferred from homology"/>
<dbReference type="EMBL" id="CP001283">
    <property type="protein sequence ID" value="ACK92136.1"/>
    <property type="molecule type" value="Genomic_DNA"/>
</dbReference>
<dbReference type="RefSeq" id="WP_000009513.1">
    <property type="nucleotide sequence ID" value="NC_011773.1"/>
</dbReference>
<dbReference type="SMR" id="B7JR69"/>
<dbReference type="GeneID" id="93006545"/>
<dbReference type="KEGG" id="bcu:BCAH820_4677"/>
<dbReference type="HOGENOM" id="CLU_188877_0_0_9"/>
<dbReference type="Proteomes" id="UP000001363">
    <property type="component" value="Chromosome"/>
</dbReference>
<dbReference type="GO" id="GO:0030436">
    <property type="term" value="P:asexual sporulation"/>
    <property type="evidence" value="ECO:0007669"/>
    <property type="project" value="UniProtKB-UniRule"/>
</dbReference>
<dbReference type="GO" id="GO:0030435">
    <property type="term" value="P:sporulation resulting in formation of a cellular spore"/>
    <property type="evidence" value="ECO:0007669"/>
    <property type="project" value="UniProtKB-KW"/>
</dbReference>
<dbReference type="HAMAP" id="MF_00669">
    <property type="entry name" value="SspI"/>
    <property type="match status" value="1"/>
</dbReference>
<dbReference type="InterPro" id="IPR017525">
    <property type="entry name" value="SspI"/>
</dbReference>
<dbReference type="NCBIfam" id="TIGR03092">
    <property type="entry name" value="SASP_sspI"/>
    <property type="match status" value="1"/>
</dbReference>
<dbReference type="Pfam" id="PF14098">
    <property type="entry name" value="SSPI"/>
    <property type="match status" value="1"/>
</dbReference>
<gene>
    <name evidence="1" type="primary">sspI</name>
    <name type="ordered locus">BCAH820_4677</name>
</gene>
<evidence type="ECO:0000255" key="1">
    <source>
        <dbReference type="HAMAP-Rule" id="MF_00669"/>
    </source>
</evidence>
<comment type="subcellular location">
    <subcellularLocation>
        <location evidence="1">Spore core</location>
    </subcellularLocation>
</comment>
<comment type="induction">
    <text evidence="1">Expressed only in the forespore compartment of sporulating cells.</text>
</comment>
<comment type="similarity">
    <text evidence="1">Belongs to the SspI family.</text>
</comment>
<accession>B7JR69</accession>
<name>SSPI_BACC0</name>